<proteinExistence type="evidence at transcript level"/>
<name>RBS_CAPAN</name>
<comment type="function">
    <text evidence="1">RuBisCO catalyzes two reactions: the carboxylation of D-ribulose 1,5-bisphosphate, the primary event in carbon dioxide fixation, as well as the oxidative fragmentation of the pentose substrate. Both reactions occur simultaneously and in competition at the same active site. Although the small subunit is not catalytic it is essential for maximal activity.</text>
</comment>
<comment type="subunit">
    <text evidence="1">Heterohexadecamer of 8 large and 8 small subunits.</text>
</comment>
<comment type="subcellular location">
    <subcellularLocation>
        <location evidence="1">Plastid</location>
        <location evidence="1">Chloroplast</location>
    </subcellularLocation>
</comment>
<comment type="miscellaneous">
    <text evidence="1">The basic functional RuBisCO is composed of a large chain homodimer in a 'head-to-tail' conformation. In form I RuBisCO this homodimer is arranged in a barrel-like tetramer with the small subunits forming a tetrameric 'cap' on each end of the 'barrel'.</text>
</comment>
<comment type="similarity">
    <text evidence="1">Belongs to the RuBisCO small chain family.</text>
</comment>
<dbReference type="EMBL" id="AF065615">
    <property type="protein sequence ID" value="AAC17126.1"/>
    <property type="molecule type" value="mRNA"/>
</dbReference>
<dbReference type="SMR" id="O65349"/>
<dbReference type="GO" id="GO:0009507">
    <property type="term" value="C:chloroplast"/>
    <property type="evidence" value="ECO:0007669"/>
    <property type="project" value="UniProtKB-SubCell"/>
</dbReference>
<dbReference type="GO" id="GO:0016984">
    <property type="term" value="F:ribulose-bisphosphate carboxylase activity"/>
    <property type="evidence" value="ECO:0007669"/>
    <property type="project" value="UniProtKB-UniRule"/>
</dbReference>
<dbReference type="GO" id="GO:0009853">
    <property type="term" value="P:photorespiration"/>
    <property type="evidence" value="ECO:0007669"/>
    <property type="project" value="UniProtKB-KW"/>
</dbReference>
<dbReference type="GO" id="GO:0019253">
    <property type="term" value="P:reductive pentose-phosphate cycle"/>
    <property type="evidence" value="ECO:0007669"/>
    <property type="project" value="UniProtKB-UniRule"/>
</dbReference>
<dbReference type="CDD" id="cd03527">
    <property type="entry name" value="RuBisCO_small"/>
    <property type="match status" value="1"/>
</dbReference>
<dbReference type="FunFam" id="3.30.190.10:FF:000001">
    <property type="entry name" value="Ribulose bisphosphate carboxylase small chain, chloroplastic"/>
    <property type="match status" value="1"/>
</dbReference>
<dbReference type="Gene3D" id="3.30.190.10">
    <property type="entry name" value="Ribulose bisphosphate carboxylase, small subunit"/>
    <property type="match status" value="1"/>
</dbReference>
<dbReference type="HAMAP" id="MF_00859">
    <property type="entry name" value="RuBisCO_S_bact"/>
    <property type="match status" value="1"/>
</dbReference>
<dbReference type="InterPro" id="IPR024681">
    <property type="entry name" value="RuBisCO_ssu"/>
</dbReference>
<dbReference type="InterPro" id="IPR000894">
    <property type="entry name" value="RuBisCO_ssu_dom"/>
</dbReference>
<dbReference type="InterPro" id="IPR024680">
    <property type="entry name" value="RuBisCO_ssu_N"/>
</dbReference>
<dbReference type="InterPro" id="IPR036385">
    <property type="entry name" value="RuBisCO_ssu_sf"/>
</dbReference>
<dbReference type="PANTHER" id="PTHR31262">
    <property type="entry name" value="RIBULOSE BISPHOSPHATE CARBOXYLASE SMALL CHAIN 1, CHLOROPLASTIC"/>
    <property type="match status" value="1"/>
</dbReference>
<dbReference type="PANTHER" id="PTHR31262:SF10">
    <property type="entry name" value="RIBULOSE BISPHOSPHATE CARBOXYLASE SMALL SUBUNIT 1A, CHLOROPLASTIC-RELATED"/>
    <property type="match status" value="1"/>
</dbReference>
<dbReference type="Pfam" id="PF12338">
    <property type="entry name" value="RbcS"/>
    <property type="match status" value="1"/>
</dbReference>
<dbReference type="Pfam" id="PF00101">
    <property type="entry name" value="RuBisCO_small"/>
    <property type="match status" value="1"/>
</dbReference>
<dbReference type="PRINTS" id="PR00152">
    <property type="entry name" value="RUBISCOSMALL"/>
</dbReference>
<dbReference type="SMART" id="SM00961">
    <property type="entry name" value="RuBisCO_small"/>
    <property type="match status" value="1"/>
</dbReference>
<dbReference type="SUPFAM" id="SSF55239">
    <property type="entry name" value="RuBisCO, small subunit"/>
    <property type="match status" value="1"/>
</dbReference>
<accession>O65349</accession>
<reference key="1">
    <citation type="submission" date="1998-05" db="EMBL/GenBank/DDBJ databases">
        <authorList>
            <person name="Kim C.H."/>
            <person name="Kim H.S."/>
            <person name="Hong Y.-N."/>
        </authorList>
    </citation>
    <scope>NUCLEOTIDE SEQUENCE [MRNA]</scope>
</reference>
<evidence type="ECO:0000255" key="1">
    <source>
        <dbReference type="HAMAP-Rule" id="MF_00860"/>
    </source>
</evidence>
<protein>
    <recommendedName>
        <fullName evidence="1">Ribulose bisphosphate carboxylase small subunit, chloroplastic</fullName>
        <shortName evidence="1">RuBisCO small subunit</shortName>
    </recommendedName>
</protein>
<sequence>MASSVMSTATVATGANAAQASMIASFNGLKSAASFPVTRKQDLDITSIASNGGRVECMLVWPPINKKKYETLSYLPDLSDEQLLKEIEYLLQKGWVPCLEFETEHGFVYREHHRSPGYYDGRYWTMWKLPMFGCTDATQVLNEVQEAKKAYPQAWIRIIGFDNVRQVQCISFIAYKPEATKFSMFNV</sequence>
<keyword id="KW-0113">Calvin cycle</keyword>
<keyword id="KW-0120">Carbon dioxide fixation</keyword>
<keyword id="KW-0150">Chloroplast</keyword>
<keyword id="KW-0601">Photorespiration</keyword>
<keyword id="KW-0602">Photosynthesis</keyword>
<keyword id="KW-0934">Plastid</keyword>
<keyword id="KW-0809">Transit peptide</keyword>
<gene>
    <name evidence="1" type="primary">RBCS</name>
</gene>
<feature type="transit peptide" description="Chloroplast" evidence="1">
    <location>
        <begin position="1"/>
        <end position="56"/>
    </location>
</feature>
<feature type="chain" id="PRO_0000031471" description="Ribulose bisphosphate carboxylase small subunit, chloroplastic" evidence="1">
    <location>
        <begin position="57"/>
        <end position="187"/>
    </location>
</feature>
<organism>
    <name type="scientific">Capsicum annuum</name>
    <name type="common">Capsicum pepper</name>
    <dbReference type="NCBI Taxonomy" id="4072"/>
    <lineage>
        <taxon>Eukaryota</taxon>
        <taxon>Viridiplantae</taxon>
        <taxon>Streptophyta</taxon>
        <taxon>Embryophyta</taxon>
        <taxon>Tracheophyta</taxon>
        <taxon>Spermatophyta</taxon>
        <taxon>Magnoliopsida</taxon>
        <taxon>eudicotyledons</taxon>
        <taxon>Gunneridae</taxon>
        <taxon>Pentapetalae</taxon>
        <taxon>asterids</taxon>
        <taxon>lamiids</taxon>
        <taxon>Solanales</taxon>
        <taxon>Solanaceae</taxon>
        <taxon>Solanoideae</taxon>
        <taxon>Capsiceae</taxon>
        <taxon>Capsicum</taxon>
    </lineage>
</organism>